<protein>
    <recommendedName>
        <fullName>Hemoglobin subunit beta</fullName>
    </recommendedName>
    <alternativeName>
        <fullName>Beta-globin</fullName>
    </alternativeName>
    <alternativeName>
        <fullName>Hemoglobin beta chain</fullName>
    </alternativeName>
</protein>
<organism>
    <name type="scientific">Mustela lutreola</name>
    <name type="common">European mink</name>
    <dbReference type="NCBI Taxonomy" id="9666"/>
    <lineage>
        <taxon>Eukaryota</taxon>
        <taxon>Metazoa</taxon>
        <taxon>Chordata</taxon>
        <taxon>Craniata</taxon>
        <taxon>Vertebrata</taxon>
        <taxon>Euteleostomi</taxon>
        <taxon>Mammalia</taxon>
        <taxon>Eutheria</taxon>
        <taxon>Laurasiatheria</taxon>
        <taxon>Carnivora</taxon>
        <taxon>Caniformia</taxon>
        <taxon>Musteloidea</taxon>
        <taxon>Mustelidae</taxon>
        <taxon>Mustelinae</taxon>
        <taxon>Mustela</taxon>
    </lineage>
</organism>
<proteinExistence type="evidence at protein level"/>
<feature type="chain" id="PRO_0000053029" description="Hemoglobin subunit beta">
    <location>
        <begin position="1"/>
        <end position="146"/>
    </location>
</feature>
<feature type="domain" description="Globin" evidence="3">
    <location>
        <begin position="2"/>
        <end position="146"/>
    </location>
</feature>
<feature type="binding site" description="distal binding residue">
    <location>
        <position position="63"/>
    </location>
    <ligand>
        <name>heme b</name>
        <dbReference type="ChEBI" id="CHEBI:60344"/>
    </ligand>
    <ligandPart>
        <name>Fe</name>
        <dbReference type="ChEBI" id="CHEBI:18248"/>
    </ligandPart>
</feature>
<feature type="binding site" description="proximal binding residue">
    <location>
        <position position="92"/>
    </location>
    <ligand>
        <name>heme b</name>
        <dbReference type="ChEBI" id="CHEBI:60344"/>
    </ligand>
    <ligandPart>
        <name>Fe</name>
        <dbReference type="ChEBI" id="CHEBI:18248"/>
    </ligandPart>
</feature>
<feature type="modified residue" description="N-acetylvaline" evidence="1">
    <location>
        <position position="1"/>
    </location>
</feature>
<feature type="modified residue" description="Phosphothreonine" evidence="2">
    <location>
        <position position="12"/>
    </location>
</feature>
<feature type="modified residue" description="Phosphoserine" evidence="2">
    <location>
        <position position="44"/>
    </location>
</feature>
<feature type="modified residue" description="N6-acetyllysine" evidence="2">
    <location>
        <position position="59"/>
    </location>
</feature>
<feature type="modified residue" description="N6-acetyllysine" evidence="2">
    <location>
        <position position="82"/>
    </location>
</feature>
<feature type="modified residue" description="S-nitrosocysteine" evidence="2">
    <location>
        <position position="93"/>
    </location>
</feature>
<feature type="modified residue" description="N6-acetyllysine" evidence="2">
    <location>
        <position position="144"/>
    </location>
</feature>
<dbReference type="PIR" id="S10105">
    <property type="entry name" value="HBMNE"/>
</dbReference>
<dbReference type="SMR" id="P23602"/>
<dbReference type="GO" id="GO:0072562">
    <property type="term" value="C:blood microparticle"/>
    <property type="evidence" value="ECO:0007669"/>
    <property type="project" value="TreeGrafter"/>
</dbReference>
<dbReference type="GO" id="GO:0031838">
    <property type="term" value="C:haptoglobin-hemoglobin complex"/>
    <property type="evidence" value="ECO:0007669"/>
    <property type="project" value="TreeGrafter"/>
</dbReference>
<dbReference type="GO" id="GO:0005833">
    <property type="term" value="C:hemoglobin complex"/>
    <property type="evidence" value="ECO:0007669"/>
    <property type="project" value="InterPro"/>
</dbReference>
<dbReference type="GO" id="GO:0031720">
    <property type="term" value="F:haptoglobin binding"/>
    <property type="evidence" value="ECO:0007669"/>
    <property type="project" value="TreeGrafter"/>
</dbReference>
<dbReference type="GO" id="GO:0020037">
    <property type="term" value="F:heme binding"/>
    <property type="evidence" value="ECO:0007669"/>
    <property type="project" value="InterPro"/>
</dbReference>
<dbReference type="GO" id="GO:0031721">
    <property type="term" value="F:hemoglobin alpha binding"/>
    <property type="evidence" value="ECO:0007669"/>
    <property type="project" value="TreeGrafter"/>
</dbReference>
<dbReference type="GO" id="GO:0046872">
    <property type="term" value="F:metal ion binding"/>
    <property type="evidence" value="ECO:0007669"/>
    <property type="project" value="UniProtKB-KW"/>
</dbReference>
<dbReference type="GO" id="GO:0043177">
    <property type="term" value="F:organic acid binding"/>
    <property type="evidence" value="ECO:0007669"/>
    <property type="project" value="TreeGrafter"/>
</dbReference>
<dbReference type="GO" id="GO:0019825">
    <property type="term" value="F:oxygen binding"/>
    <property type="evidence" value="ECO:0007669"/>
    <property type="project" value="InterPro"/>
</dbReference>
<dbReference type="GO" id="GO:0005344">
    <property type="term" value="F:oxygen carrier activity"/>
    <property type="evidence" value="ECO:0007669"/>
    <property type="project" value="UniProtKB-KW"/>
</dbReference>
<dbReference type="GO" id="GO:0004601">
    <property type="term" value="F:peroxidase activity"/>
    <property type="evidence" value="ECO:0007669"/>
    <property type="project" value="TreeGrafter"/>
</dbReference>
<dbReference type="GO" id="GO:0042744">
    <property type="term" value="P:hydrogen peroxide catabolic process"/>
    <property type="evidence" value="ECO:0007669"/>
    <property type="project" value="TreeGrafter"/>
</dbReference>
<dbReference type="CDD" id="cd08925">
    <property type="entry name" value="Hb-beta-like"/>
    <property type="match status" value="1"/>
</dbReference>
<dbReference type="FunFam" id="1.10.490.10:FF:000001">
    <property type="entry name" value="Hemoglobin subunit beta"/>
    <property type="match status" value="1"/>
</dbReference>
<dbReference type="Gene3D" id="1.10.490.10">
    <property type="entry name" value="Globins"/>
    <property type="match status" value="1"/>
</dbReference>
<dbReference type="InterPro" id="IPR000971">
    <property type="entry name" value="Globin"/>
</dbReference>
<dbReference type="InterPro" id="IPR009050">
    <property type="entry name" value="Globin-like_sf"/>
</dbReference>
<dbReference type="InterPro" id="IPR012292">
    <property type="entry name" value="Globin/Proto"/>
</dbReference>
<dbReference type="InterPro" id="IPR002337">
    <property type="entry name" value="Hemoglobin_b"/>
</dbReference>
<dbReference type="InterPro" id="IPR050056">
    <property type="entry name" value="Hemoglobin_oxygen_transport"/>
</dbReference>
<dbReference type="PANTHER" id="PTHR11442">
    <property type="entry name" value="HEMOGLOBIN FAMILY MEMBER"/>
    <property type="match status" value="1"/>
</dbReference>
<dbReference type="PANTHER" id="PTHR11442:SF42">
    <property type="entry name" value="HEMOGLOBIN SUBUNIT BETA"/>
    <property type="match status" value="1"/>
</dbReference>
<dbReference type="Pfam" id="PF00042">
    <property type="entry name" value="Globin"/>
    <property type="match status" value="1"/>
</dbReference>
<dbReference type="PRINTS" id="PR00814">
    <property type="entry name" value="BETAHAEM"/>
</dbReference>
<dbReference type="SUPFAM" id="SSF46458">
    <property type="entry name" value="Globin-like"/>
    <property type="match status" value="1"/>
</dbReference>
<dbReference type="PROSITE" id="PS01033">
    <property type="entry name" value="GLOBIN"/>
    <property type="match status" value="1"/>
</dbReference>
<gene>
    <name type="primary">HBB</name>
</gene>
<name>HBB_MUSLU</name>
<sequence length="146" mass="15935">VHLTAEEKAAVTALWGKVNVDEVGGEALGRLLVVYPWTQRFFDSFGDLSSPDAVMGNPKVKAHGKKVLNSFSEGLKNLDNLKGTFAKLSELHCDKLHVDPENFKLLGNVLVCVLAHHFGKEFTPQVQAAYQKVVAGVATALAHKYH</sequence>
<keyword id="KW-0007">Acetylation</keyword>
<keyword id="KW-0903">Direct protein sequencing</keyword>
<keyword id="KW-0349">Heme</keyword>
<keyword id="KW-0408">Iron</keyword>
<keyword id="KW-0479">Metal-binding</keyword>
<keyword id="KW-0561">Oxygen transport</keyword>
<keyword id="KW-0597">Phosphoprotein</keyword>
<keyword id="KW-0702">S-nitrosylation</keyword>
<keyword id="KW-0813">Transport</keyword>
<reference key="1">
    <citation type="journal article" date="1990" name="Z. Naturforsch. C">
        <title>Carnivora: the amino acid sequence of the adult European mink (Mustela lutreola, Mustelidae) hemoglobins.</title>
        <authorList>
            <person name="Ahmed A."/>
            <person name="Jahan M."/>
            <person name="Braunitzer G."/>
        </authorList>
    </citation>
    <scope>PROTEIN SEQUENCE</scope>
</reference>
<evidence type="ECO:0000250" key="1">
    <source>
        <dbReference type="UniProtKB" id="P02086"/>
    </source>
</evidence>
<evidence type="ECO:0000250" key="2">
    <source>
        <dbReference type="UniProtKB" id="P68871"/>
    </source>
</evidence>
<evidence type="ECO:0000255" key="3">
    <source>
        <dbReference type="PROSITE-ProRule" id="PRU00238"/>
    </source>
</evidence>
<accession>P23602</accession>
<comment type="function">
    <text>Involved in oxygen transport from the lung to the various peripheral tissues.</text>
</comment>
<comment type="subunit">
    <text>Heterotetramer of two alpha chains and two beta chains.</text>
</comment>
<comment type="tissue specificity">
    <text>Red blood cells.</text>
</comment>
<comment type="similarity">
    <text evidence="3">Belongs to the globin family.</text>
</comment>